<sequence>MGASSSSSVSEKSIHQFTVKDSSGKEVDLSVYQGKVLLVVNVASKCGFTESNYTQLTELYRKYKDQGFVVLAFPCNQFLSQEPGTSEEAHQFACTRFKAEYPVFQKVRVNGQNAAPVYKFLKSKKPSFLGSRIKWNFTKFLVGKDGQVIDRYGTTVSPLSIQKDIEKALAQEL</sequence>
<keyword id="KW-1003">Cell membrane</keyword>
<keyword id="KW-0449">Lipoprotein</keyword>
<keyword id="KW-0472">Membrane</keyword>
<keyword id="KW-0519">Myristate</keyword>
<keyword id="KW-0560">Oxidoreductase</keyword>
<keyword id="KW-0575">Peroxidase</keyword>
<keyword id="KW-1185">Reference proteome</keyword>
<keyword id="KW-0346">Stress response</keyword>
<reference key="1">
    <citation type="journal article" date="2000" name="Nature">
        <title>Sequence and analysis of chromosome 3 of the plant Arabidopsis thaliana.</title>
        <authorList>
            <person name="Salanoubat M."/>
            <person name="Lemcke K."/>
            <person name="Rieger M."/>
            <person name="Ansorge W."/>
            <person name="Unseld M."/>
            <person name="Fartmann B."/>
            <person name="Valle G."/>
            <person name="Bloecker H."/>
            <person name="Perez-Alonso M."/>
            <person name="Obermaier B."/>
            <person name="Delseny M."/>
            <person name="Boutry M."/>
            <person name="Grivell L.A."/>
            <person name="Mache R."/>
            <person name="Puigdomenech P."/>
            <person name="De Simone V."/>
            <person name="Choisne N."/>
            <person name="Artiguenave F."/>
            <person name="Robert C."/>
            <person name="Brottier P."/>
            <person name="Wincker P."/>
            <person name="Cattolico L."/>
            <person name="Weissenbach J."/>
            <person name="Saurin W."/>
            <person name="Quetier F."/>
            <person name="Schaefer M."/>
            <person name="Mueller-Auer S."/>
            <person name="Gabel C."/>
            <person name="Fuchs M."/>
            <person name="Benes V."/>
            <person name="Wurmbach E."/>
            <person name="Drzonek H."/>
            <person name="Erfle H."/>
            <person name="Jordan N."/>
            <person name="Bangert S."/>
            <person name="Wiedelmann R."/>
            <person name="Kranz H."/>
            <person name="Voss H."/>
            <person name="Holland R."/>
            <person name="Brandt P."/>
            <person name="Nyakatura G."/>
            <person name="Vezzi A."/>
            <person name="D'Angelo M."/>
            <person name="Pallavicini A."/>
            <person name="Toppo S."/>
            <person name="Simionati B."/>
            <person name="Conrad A."/>
            <person name="Hornischer K."/>
            <person name="Kauer G."/>
            <person name="Loehnert T.-H."/>
            <person name="Nordsiek G."/>
            <person name="Reichelt J."/>
            <person name="Scharfe M."/>
            <person name="Schoen O."/>
            <person name="Bargues M."/>
            <person name="Terol J."/>
            <person name="Climent J."/>
            <person name="Navarro P."/>
            <person name="Collado C."/>
            <person name="Perez-Perez A."/>
            <person name="Ottenwaelder B."/>
            <person name="Duchemin D."/>
            <person name="Cooke R."/>
            <person name="Laudie M."/>
            <person name="Berger-Llauro C."/>
            <person name="Purnelle B."/>
            <person name="Masuy D."/>
            <person name="de Haan M."/>
            <person name="Maarse A.C."/>
            <person name="Alcaraz J.-P."/>
            <person name="Cottet A."/>
            <person name="Casacuberta E."/>
            <person name="Monfort A."/>
            <person name="Argiriou A."/>
            <person name="Flores M."/>
            <person name="Liguori R."/>
            <person name="Vitale D."/>
            <person name="Mannhaupt G."/>
            <person name="Haase D."/>
            <person name="Schoof H."/>
            <person name="Rudd S."/>
            <person name="Zaccaria P."/>
            <person name="Mewes H.-W."/>
            <person name="Mayer K.F.X."/>
            <person name="Kaul S."/>
            <person name="Town C.D."/>
            <person name="Koo H.L."/>
            <person name="Tallon L.J."/>
            <person name="Jenkins J."/>
            <person name="Rooney T."/>
            <person name="Rizzo M."/>
            <person name="Walts A."/>
            <person name="Utterback T."/>
            <person name="Fujii C.Y."/>
            <person name="Shea T.P."/>
            <person name="Creasy T.H."/>
            <person name="Haas B."/>
            <person name="Maiti R."/>
            <person name="Wu D."/>
            <person name="Peterson J."/>
            <person name="Van Aken S."/>
            <person name="Pai G."/>
            <person name="Militscher J."/>
            <person name="Sellers P."/>
            <person name="Gill J.E."/>
            <person name="Feldblyum T.V."/>
            <person name="Preuss D."/>
            <person name="Lin X."/>
            <person name="Nierman W.C."/>
            <person name="Salzberg S.L."/>
            <person name="White O."/>
            <person name="Venter J.C."/>
            <person name="Fraser C.M."/>
            <person name="Kaneko T."/>
            <person name="Nakamura Y."/>
            <person name="Sato S."/>
            <person name="Kato T."/>
            <person name="Asamizu E."/>
            <person name="Sasamoto S."/>
            <person name="Kimura T."/>
            <person name="Idesawa K."/>
            <person name="Kawashima K."/>
            <person name="Kishida Y."/>
            <person name="Kiyokawa C."/>
            <person name="Kohara M."/>
            <person name="Matsumoto M."/>
            <person name="Matsuno A."/>
            <person name="Muraki A."/>
            <person name="Nakayama S."/>
            <person name="Nakazaki N."/>
            <person name="Shinpo S."/>
            <person name="Takeuchi C."/>
            <person name="Wada T."/>
            <person name="Watanabe A."/>
            <person name="Yamada M."/>
            <person name="Yasuda M."/>
            <person name="Tabata S."/>
        </authorList>
    </citation>
    <scope>NUCLEOTIDE SEQUENCE [LARGE SCALE GENOMIC DNA]</scope>
    <source>
        <strain>cv. Columbia</strain>
    </source>
</reference>
<reference key="2">
    <citation type="journal article" date="2017" name="Plant J.">
        <title>Araport11: a complete reannotation of the Arabidopsis thaliana reference genome.</title>
        <authorList>
            <person name="Cheng C.Y."/>
            <person name="Krishnakumar V."/>
            <person name="Chan A.P."/>
            <person name="Thibaud-Nissen F."/>
            <person name="Schobel S."/>
            <person name="Town C.D."/>
        </authorList>
    </citation>
    <scope>GENOME REANNOTATION</scope>
    <source>
        <strain>cv. Columbia</strain>
    </source>
</reference>
<reference key="3">
    <citation type="journal article" date="2003" name="Science">
        <title>Empirical analysis of transcriptional activity in the Arabidopsis genome.</title>
        <authorList>
            <person name="Yamada K."/>
            <person name="Lim J."/>
            <person name="Dale J.M."/>
            <person name="Chen H."/>
            <person name="Shinn P."/>
            <person name="Palm C.J."/>
            <person name="Southwick A.M."/>
            <person name="Wu H.C."/>
            <person name="Kim C.J."/>
            <person name="Nguyen M."/>
            <person name="Pham P.K."/>
            <person name="Cheuk R.F."/>
            <person name="Karlin-Newmann G."/>
            <person name="Liu S.X."/>
            <person name="Lam B."/>
            <person name="Sakano H."/>
            <person name="Wu T."/>
            <person name="Yu G."/>
            <person name="Miranda M."/>
            <person name="Quach H.L."/>
            <person name="Tripp M."/>
            <person name="Chang C.H."/>
            <person name="Lee J.M."/>
            <person name="Toriumi M.J."/>
            <person name="Chan M.M."/>
            <person name="Tang C.C."/>
            <person name="Onodera C.S."/>
            <person name="Deng J.M."/>
            <person name="Akiyama K."/>
            <person name="Ansari Y."/>
            <person name="Arakawa T."/>
            <person name="Banh J."/>
            <person name="Banno F."/>
            <person name="Bowser L."/>
            <person name="Brooks S.Y."/>
            <person name="Carninci P."/>
            <person name="Chao Q."/>
            <person name="Choy N."/>
            <person name="Enju A."/>
            <person name="Goldsmith A.D."/>
            <person name="Gurjal M."/>
            <person name="Hansen N.F."/>
            <person name="Hayashizaki Y."/>
            <person name="Johnson-Hopson C."/>
            <person name="Hsuan V.W."/>
            <person name="Iida K."/>
            <person name="Karnes M."/>
            <person name="Khan S."/>
            <person name="Koesema E."/>
            <person name="Ishida J."/>
            <person name="Jiang P.X."/>
            <person name="Jones T."/>
            <person name="Kawai J."/>
            <person name="Kamiya A."/>
            <person name="Meyers C."/>
            <person name="Nakajima M."/>
            <person name="Narusaka M."/>
            <person name="Seki M."/>
            <person name="Sakurai T."/>
            <person name="Satou M."/>
            <person name="Tamse R."/>
            <person name="Vaysberg M."/>
            <person name="Wallender E.K."/>
            <person name="Wong C."/>
            <person name="Yamamura Y."/>
            <person name="Yuan S."/>
            <person name="Shinozaki K."/>
            <person name="Davis R.W."/>
            <person name="Theologis A."/>
            <person name="Ecker J.R."/>
        </authorList>
    </citation>
    <scope>NUCLEOTIDE SEQUENCE [LARGE SCALE MRNA]</scope>
    <source>
        <strain>cv. Columbia</strain>
    </source>
</reference>
<reference key="4">
    <citation type="submission" date="2002-03" db="EMBL/GenBank/DDBJ databases">
        <title>Full-length cDNA from Arabidopsis thaliana.</title>
        <authorList>
            <person name="Brover V.V."/>
            <person name="Troukhan M.E."/>
            <person name="Alexandrov N.A."/>
            <person name="Lu Y.-P."/>
            <person name="Flavell R.B."/>
            <person name="Feldmann K.A."/>
        </authorList>
    </citation>
    <scope>NUCLEOTIDE SEQUENCE [LARGE SCALE MRNA]</scope>
</reference>
<reference key="5">
    <citation type="journal article" date="2003" name="Plant J.">
        <title>Glutathione peroxidase genes in Arabidopsis are ubiquitous and regulated by abiotic stresses through diverse signaling pathways.</title>
        <authorList>
            <person name="Rodriguez Milla M.A."/>
            <person name="Maurer A."/>
            <person name="Rodriguez Huete A."/>
            <person name="Gustafson J.P."/>
        </authorList>
    </citation>
    <scope>GENE FAMILY</scope>
    <scope>NOMENCLATURE</scope>
    <scope>TISSUE SPECIFICITY</scope>
    <scope>INDUCTION</scope>
</reference>
<reference key="6">
    <citation type="journal article" date="2004" name="Mol. Cell. Proteomics">
        <title>Identification of new intrinsic proteins in Arabidopsis plasma membrane proteome.</title>
        <authorList>
            <person name="Marmagne A."/>
            <person name="Rouet M.-A."/>
            <person name="Ferro M."/>
            <person name="Rolland N."/>
            <person name="Alcon C."/>
            <person name="Joyard J."/>
            <person name="Garin J."/>
            <person name="Barbier-Brygoo H."/>
            <person name="Ephritikhine G."/>
        </authorList>
    </citation>
    <scope>IDENTIFICATION BY MASS SPECTROMETRY</scope>
    <scope>SUBCELLULAR LOCATION [LARGE SCALE ANALYSIS]</scope>
</reference>
<reference key="7">
    <citation type="journal article" date="2012" name="Mol. Cell. Proteomics">
        <title>Comparative large-scale characterisation of plant vs. mammal proteins reveals similar and idiosyncratic N-alpha acetylation features.</title>
        <authorList>
            <person name="Bienvenut W.V."/>
            <person name="Sumpton D."/>
            <person name="Martinez A."/>
            <person name="Lilla S."/>
            <person name="Espagne C."/>
            <person name="Meinnel T."/>
            <person name="Giglione C."/>
        </authorList>
    </citation>
    <scope>MYRISTOYLATION AT GLY-2</scope>
    <scope>CLEAVAGE OF INITIATOR METHIONINE [LARGE SCALE ANALYSIS]</scope>
    <scope>IDENTIFICATION BY MASS SPECTROMETRY [LARGE SCALE ANALYSIS]</scope>
</reference>
<gene>
    <name type="primary">GPX5</name>
    <name type="ordered locus">At3g63080</name>
    <name type="ORF">T20O10_180</name>
</gene>
<dbReference type="EC" id="1.11.1.9"/>
<dbReference type="EMBL" id="AL163816">
    <property type="protein sequence ID" value="CAB87753.1"/>
    <property type="molecule type" value="Genomic_DNA"/>
</dbReference>
<dbReference type="EMBL" id="CP002686">
    <property type="protein sequence ID" value="AEE80432.1"/>
    <property type="molecule type" value="Genomic_DNA"/>
</dbReference>
<dbReference type="EMBL" id="BT003821">
    <property type="protein sequence ID" value="AAO41874.1"/>
    <property type="molecule type" value="mRNA"/>
</dbReference>
<dbReference type="EMBL" id="BT005137">
    <property type="protein sequence ID" value="AAO50670.1"/>
    <property type="molecule type" value="mRNA"/>
</dbReference>
<dbReference type="EMBL" id="AY085116">
    <property type="protein sequence ID" value="AAM61670.1"/>
    <property type="molecule type" value="mRNA"/>
</dbReference>
<dbReference type="PIR" id="T48097">
    <property type="entry name" value="T48097"/>
</dbReference>
<dbReference type="RefSeq" id="NP_191867.1">
    <property type="nucleotide sequence ID" value="NM_116173.4"/>
</dbReference>
<dbReference type="SMR" id="Q9LYB4"/>
<dbReference type="BioGRID" id="10797">
    <property type="interactions" value="6"/>
</dbReference>
<dbReference type="FunCoup" id="Q9LYB4">
    <property type="interactions" value="2592"/>
</dbReference>
<dbReference type="IntAct" id="Q9LYB4">
    <property type="interactions" value="6"/>
</dbReference>
<dbReference type="STRING" id="3702.Q9LYB4"/>
<dbReference type="PeroxiBase" id="2475">
    <property type="entry name" value="AtGPx05"/>
</dbReference>
<dbReference type="iPTMnet" id="Q9LYB4"/>
<dbReference type="PaxDb" id="3702-AT3G63080.1"/>
<dbReference type="ProteomicsDB" id="220581"/>
<dbReference type="DNASU" id="825483"/>
<dbReference type="EnsemblPlants" id="AT3G63080.1">
    <property type="protein sequence ID" value="AT3G63080.1"/>
    <property type="gene ID" value="AT3G63080"/>
</dbReference>
<dbReference type="GeneID" id="825483"/>
<dbReference type="Gramene" id="AT3G63080.1">
    <property type="protein sequence ID" value="AT3G63080.1"/>
    <property type="gene ID" value="AT3G63080"/>
</dbReference>
<dbReference type="KEGG" id="ath:AT3G63080"/>
<dbReference type="Araport" id="AT3G63080"/>
<dbReference type="TAIR" id="AT3G63080">
    <property type="gene designation" value="GPX5"/>
</dbReference>
<dbReference type="eggNOG" id="KOG1651">
    <property type="taxonomic scope" value="Eukaryota"/>
</dbReference>
<dbReference type="HOGENOM" id="CLU_029507_0_1_1"/>
<dbReference type="InParanoid" id="Q9LYB4"/>
<dbReference type="OMA" id="HMMKDID"/>
<dbReference type="OrthoDB" id="446890at2759"/>
<dbReference type="PhylomeDB" id="Q9LYB4"/>
<dbReference type="BioCyc" id="ARA:AT3G63080-MONOMER"/>
<dbReference type="PRO" id="PR:Q9LYB4"/>
<dbReference type="Proteomes" id="UP000006548">
    <property type="component" value="Chromosome 3"/>
</dbReference>
<dbReference type="ExpressionAtlas" id="Q9LYB4">
    <property type="expression patterns" value="baseline and differential"/>
</dbReference>
<dbReference type="GO" id="GO:0005829">
    <property type="term" value="C:cytosol"/>
    <property type="evidence" value="ECO:0007005"/>
    <property type="project" value="TAIR"/>
</dbReference>
<dbReference type="GO" id="GO:0012505">
    <property type="term" value="C:endomembrane system"/>
    <property type="evidence" value="ECO:0000314"/>
    <property type="project" value="TAIR"/>
</dbReference>
<dbReference type="GO" id="GO:0005783">
    <property type="term" value="C:endoplasmic reticulum"/>
    <property type="evidence" value="ECO:0000250"/>
    <property type="project" value="TAIR"/>
</dbReference>
<dbReference type="GO" id="GO:0005886">
    <property type="term" value="C:plasma membrane"/>
    <property type="evidence" value="ECO:0007005"/>
    <property type="project" value="TAIR"/>
</dbReference>
<dbReference type="GO" id="GO:0004602">
    <property type="term" value="F:glutathione peroxidase activity"/>
    <property type="evidence" value="ECO:0007669"/>
    <property type="project" value="UniProtKB-EC"/>
</dbReference>
<dbReference type="GO" id="GO:0009793">
    <property type="term" value="P:embryo development ending in seed dormancy"/>
    <property type="evidence" value="ECO:0000315"/>
    <property type="project" value="TAIR"/>
</dbReference>
<dbReference type="GO" id="GO:0006979">
    <property type="term" value="P:response to oxidative stress"/>
    <property type="evidence" value="ECO:0007669"/>
    <property type="project" value="InterPro"/>
</dbReference>
<dbReference type="CDD" id="cd00340">
    <property type="entry name" value="GSH_Peroxidase"/>
    <property type="match status" value="1"/>
</dbReference>
<dbReference type="FunFam" id="3.40.30.10:FF:000025">
    <property type="entry name" value="Glutathione peroxidase"/>
    <property type="match status" value="1"/>
</dbReference>
<dbReference type="Gene3D" id="3.40.30.10">
    <property type="entry name" value="Glutaredoxin"/>
    <property type="match status" value="1"/>
</dbReference>
<dbReference type="InterPro" id="IPR000889">
    <property type="entry name" value="Glutathione_peroxidase"/>
</dbReference>
<dbReference type="InterPro" id="IPR029759">
    <property type="entry name" value="GPX_AS"/>
</dbReference>
<dbReference type="InterPro" id="IPR029760">
    <property type="entry name" value="GPX_CS"/>
</dbReference>
<dbReference type="InterPro" id="IPR036249">
    <property type="entry name" value="Thioredoxin-like_sf"/>
</dbReference>
<dbReference type="InterPro" id="IPR013766">
    <property type="entry name" value="Thioredoxin_domain"/>
</dbReference>
<dbReference type="PANTHER" id="PTHR11592">
    <property type="entry name" value="GLUTATHIONE PEROXIDASE"/>
    <property type="match status" value="1"/>
</dbReference>
<dbReference type="PANTHER" id="PTHR11592:SF17">
    <property type="entry name" value="GLUTATHIONE PEROXIDASE 5-RELATED"/>
    <property type="match status" value="1"/>
</dbReference>
<dbReference type="Pfam" id="PF00255">
    <property type="entry name" value="GSHPx"/>
    <property type="match status" value="1"/>
</dbReference>
<dbReference type="PIRSF" id="PIRSF000303">
    <property type="entry name" value="Glutathion_perox"/>
    <property type="match status" value="1"/>
</dbReference>
<dbReference type="PRINTS" id="PR01011">
    <property type="entry name" value="GLUTPROXDASE"/>
</dbReference>
<dbReference type="SUPFAM" id="SSF52833">
    <property type="entry name" value="Thioredoxin-like"/>
    <property type="match status" value="1"/>
</dbReference>
<dbReference type="PROSITE" id="PS00460">
    <property type="entry name" value="GLUTATHIONE_PEROXID_1"/>
    <property type="match status" value="1"/>
</dbReference>
<dbReference type="PROSITE" id="PS00763">
    <property type="entry name" value="GLUTATHIONE_PEROXID_2"/>
    <property type="match status" value="1"/>
</dbReference>
<dbReference type="PROSITE" id="PS51355">
    <property type="entry name" value="GLUTATHIONE_PEROXID_3"/>
    <property type="match status" value="1"/>
</dbReference>
<evidence type="ECO:0000250" key="1"/>
<evidence type="ECO:0000269" key="2">
    <source>
    </source>
</evidence>
<evidence type="ECO:0000269" key="3">
    <source>
    </source>
</evidence>
<evidence type="ECO:0000269" key="4">
    <source>
    </source>
</evidence>
<evidence type="ECO:0000305" key="5"/>
<evidence type="ECO:0007744" key="6">
    <source>
    </source>
</evidence>
<proteinExistence type="evidence at protein level"/>
<feature type="initiator methionine" description="Removed" evidence="4 6">
    <location>
        <position position="1"/>
    </location>
</feature>
<feature type="chain" id="PRO_0000066639" description="Probable glutathione peroxidase 5">
    <location>
        <begin position="2"/>
        <end position="173"/>
    </location>
</feature>
<feature type="active site" evidence="1">
    <location>
        <position position="46"/>
    </location>
</feature>
<feature type="lipid moiety-binding region" description="N-myristoyl glycine" evidence="4">
    <location>
        <position position="2"/>
    </location>
</feature>
<name>GPX5_ARATH</name>
<protein>
    <recommendedName>
        <fullName>Probable glutathione peroxidase 5</fullName>
        <ecNumber>1.11.1.9</ecNumber>
    </recommendedName>
</protein>
<organism>
    <name type="scientific">Arabidopsis thaliana</name>
    <name type="common">Mouse-ear cress</name>
    <dbReference type="NCBI Taxonomy" id="3702"/>
    <lineage>
        <taxon>Eukaryota</taxon>
        <taxon>Viridiplantae</taxon>
        <taxon>Streptophyta</taxon>
        <taxon>Embryophyta</taxon>
        <taxon>Tracheophyta</taxon>
        <taxon>Spermatophyta</taxon>
        <taxon>Magnoliopsida</taxon>
        <taxon>eudicotyledons</taxon>
        <taxon>Gunneridae</taxon>
        <taxon>Pentapetalae</taxon>
        <taxon>rosids</taxon>
        <taxon>malvids</taxon>
        <taxon>Brassicales</taxon>
        <taxon>Brassicaceae</taxon>
        <taxon>Camelineae</taxon>
        <taxon>Arabidopsis</taxon>
    </lineage>
</organism>
<accession>Q9LYB4</accession>
<comment type="function">
    <text evidence="1">May constitute a glutathione peroxidase-like protective system against oxidative stresses.</text>
</comment>
<comment type="catalytic activity">
    <reaction>
        <text>2 glutathione + H2O2 = glutathione disulfide + 2 H2O</text>
        <dbReference type="Rhea" id="RHEA:16833"/>
        <dbReference type="ChEBI" id="CHEBI:15377"/>
        <dbReference type="ChEBI" id="CHEBI:16240"/>
        <dbReference type="ChEBI" id="CHEBI:57925"/>
        <dbReference type="ChEBI" id="CHEBI:58297"/>
        <dbReference type="EC" id="1.11.1.9"/>
    </reaction>
</comment>
<comment type="subcellular location">
    <subcellularLocation>
        <location evidence="3">Cell membrane</location>
        <topology evidence="5">Lipid-anchor</topology>
    </subcellularLocation>
</comment>
<comment type="tissue specificity">
    <text evidence="2">Ubiquitous.</text>
</comment>
<comment type="induction">
    <text evidence="2">By salt stress, osmotic stress and metals. Down-regulated by abscisic acid (ABA).</text>
</comment>
<comment type="similarity">
    <text evidence="5">Belongs to the glutathione peroxidase family.</text>
</comment>